<accession>Q60355</accession>
<comment type="function">
    <text evidence="3">Probably an RNase (PubMed:21955587).</text>
</comment>
<comment type="cofactor">
    <cofactor evidence="1">
        <name>Zn(2+)</name>
        <dbReference type="ChEBI" id="CHEBI:29105"/>
    </cofactor>
</comment>
<comment type="similarity">
    <text evidence="3">Belongs to the metallo-beta-lactamase superfamily. RNA-metabolizing metallo-beta-lactamase-like family.</text>
</comment>
<protein>
    <recommendedName>
        <fullName evidence="2">Probable RNase MJ4</fullName>
        <ecNumber>3.1.-.-</ecNumber>
    </recommendedName>
</protein>
<dbReference type="EC" id="3.1.-.-"/>
<dbReference type="EMBL" id="L77117">
    <property type="protein sequence ID" value="AAB98027.1"/>
    <property type="molecule type" value="Genomic_DNA"/>
</dbReference>
<dbReference type="RefSeq" id="WP_010869538.1">
    <property type="nucleotide sequence ID" value="NC_000909.1"/>
</dbReference>
<dbReference type="SMR" id="Q60355"/>
<dbReference type="STRING" id="243232.MJ_0047"/>
<dbReference type="PaxDb" id="243232-MJ_0047"/>
<dbReference type="EnsemblBacteria" id="AAB98027">
    <property type="protein sequence ID" value="AAB98027"/>
    <property type="gene ID" value="MJ_0047"/>
</dbReference>
<dbReference type="GeneID" id="1450885"/>
<dbReference type="KEGG" id="mja:MJ_0047"/>
<dbReference type="eggNOG" id="arCOG00541">
    <property type="taxonomic scope" value="Archaea"/>
</dbReference>
<dbReference type="HOGENOM" id="CLU_009673_5_1_2"/>
<dbReference type="InParanoid" id="Q60355"/>
<dbReference type="OrthoDB" id="40950at2157"/>
<dbReference type="PhylomeDB" id="Q60355"/>
<dbReference type="Proteomes" id="UP000000805">
    <property type="component" value="Chromosome"/>
</dbReference>
<dbReference type="GO" id="GO:0046872">
    <property type="term" value="F:metal ion binding"/>
    <property type="evidence" value="ECO:0007669"/>
    <property type="project" value="UniProtKB-KW"/>
</dbReference>
<dbReference type="GO" id="GO:0004521">
    <property type="term" value="F:RNA endonuclease activity"/>
    <property type="evidence" value="ECO:0000318"/>
    <property type="project" value="GO_Central"/>
</dbReference>
<dbReference type="CDD" id="cd16295">
    <property type="entry name" value="TTHA0252-CPSF-like_MBL-fold"/>
    <property type="match status" value="1"/>
</dbReference>
<dbReference type="Gene3D" id="3.40.50.10890">
    <property type="match status" value="1"/>
</dbReference>
<dbReference type="Gene3D" id="3.60.15.10">
    <property type="entry name" value="Ribonuclease Z/Hydroxyacylglutathione hydrolase-like"/>
    <property type="match status" value="1"/>
</dbReference>
<dbReference type="InterPro" id="IPR022712">
    <property type="entry name" value="Beta_Casp"/>
</dbReference>
<dbReference type="InterPro" id="IPR050698">
    <property type="entry name" value="MBL"/>
</dbReference>
<dbReference type="InterPro" id="IPR001279">
    <property type="entry name" value="Metallo-B-lactamas"/>
</dbReference>
<dbReference type="InterPro" id="IPR036866">
    <property type="entry name" value="RibonucZ/Hydroxyglut_hydro"/>
</dbReference>
<dbReference type="InterPro" id="IPR011108">
    <property type="entry name" value="RMMBL"/>
</dbReference>
<dbReference type="PANTHER" id="PTHR11203">
    <property type="entry name" value="CLEAVAGE AND POLYADENYLATION SPECIFICITY FACTOR FAMILY MEMBER"/>
    <property type="match status" value="1"/>
</dbReference>
<dbReference type="PANTHER" id="PTHR11203:SF37">
    <property type="entry name" value="INTEGRATOR COMPLEX SUBUNIT 11"/>
    <property type="match status" value="1"/>
</dbReference>
<dbReference type="Pfam" id="PF10996">
    <property type="entry name" value="Beta-Casp"/>
    <property type="match status" value="1"/>
</dbReference>
<dbReference type="Pfam" id="PF16661">
    <property type="entry name" value="Lactamase_B_6"/>
    <property type="match status" value="1"/>
</dbReference>
<dbReference type="Pfam" id="PF07521">
    <property type="entry name" value="RMMBL"/>
    <property type="match status" value="1"/>
</dbReference>
<dbReference type="SMART" id="SM01027">
    <property type="entry name" value="Beta-Casp"/>
    <property type="match status" value="1"/>
</dbReference>
<dbReference type="SMART" id="SM00849">
    <property type="entry name" value="Lactamase_B"/>
    <property type="match status" value="1"/>
</dbReference>
<dbReference type="SUPFAM" id="SSF56281">
    <property type="entry name" value="Metallo-hydrolase/oxidoreductase"/>
    <property type="match status" value="1"/>
</dbReference>
<keyword id="KW-0378">Hydrolase</keyword>
<keyword id="KW-0479">Metal-binding</keyword>
<keyword id="KW-0540">Nuclease</keyword>
<keyword id="KW-1185">Reference proteome</keyword>
<keyword id="KW-0862">Zinc</keyword>
<sequence length="428" mass="48492">MEIIFRGAALEVGRSCIEIKTDKSKILLDCGVKLGKEIEYPILDNSIRDVDKVFISHAHLDHSGALPVLFHRKMDVPVITTELSKKLIKVLLKDMVKIAETENKKIPYNNHDVKEAIRHTIPLNYNDKKYYKDFSYELFSAGHIPGSASILLNYQNNKTILYTGDVKLRDTRLTKGADLSYTKDDIDILIIESTYGNSIHPDRKAVELSFIEKIKEILFRGGVALIPVFAVDRAQEILLILNDYNIDAPIYLDGMAVEVTKLMLNYKHMLNESSQLEKALKNVKIIEKSEDRIKAIENLSKNGGIVVTTAGMLDGGPILYYLKLFMHNPKNALLLTGYQVRDSNGRHLIETGKIFIGKDEIKPNLEVCMYNFSCHAGMDELHEIIKKVNPELLIIQHGEEVQATILRNWALEHGFDAITPKLGEKIRI</sequence>
<evidence type="ECO:0000250" key="1">
    <source>
        <dbReference type="UniProtKB" id="Q58271"/>
    </source>
</evidence>
<evidence type="ECO:0000303" key="2">
    <source>
    </source>
</evidence>
<evidence type="ECO:0000305" key="3">
    <source>
    </source>
</evidence>
<feature type="chain" id="PRO_0000106668" description="Probable RNase MJ4">
    <location>
        <begin position="1"/>
        <end position="428"/>
    </location>
</feature>
<feature type="binding site" evidence="1">
    <location>
        <position position="57"/>
    </location>
    <ligand>
        <name>Zn(2+)</name>
        <dbReference type="ChEBI" id="CHEBI:29105"/>
        <label>1</label>
        <note>catalytic</note>
    </ligand>
</feature>
<feature type="binding site" evidence="1">
    <location>
        <position position="59"/>
    </location>
    <ligand>
        <name>Zn(2+)</name>
        <dbReference type="ChEBI" id="CHEBI:29105"/>
        <label>1</label>
        <note>catalytic</note>
    </ligand>
</feature>
<feature type="binding site" evidence="1">
    <location>
        <position position="61"/>
    </location>
    <ligand>
        <name>Zn(2+)</name>
        <dbReference type="ChEBI" id="CHEBI:29105"/>
        <label>2</label>
        <note>catalytic</note>
    </ligand>
</feature>
<feature type="binding site" evidence="1">
    <location>
        <position position="62"/>
    </location>
    <ligand>
        <name>Zn(2+)</name>
        <dbReference type="ChEBI" id="CHEBI:29105"/>
        <label>2</label>
        <note>catalytic</note>
    </ligand>
</feature>
<feature type="binding site" evidence="1">
    <location>
        <position position="143"/>
    </location>
    <ligand>
        <name>Zn(2+)</name>
        <dbReference type="ChEBI" id="CHEBI:29105"/>
        <label>1</label>
        <note>catalytic</note>
    </ligand>
</feature>
<feature type="binding site" evidence="1">
    <location>
        <position position="165"/>
    </location>
    <ligand>
        <name>Zn(2+)</name>
        <dbReference type="ChEBI" id="CHEBI:29105"/>
        <label>1</label>
        <note>catalytic</note>
    </ligand>
</feature>
<feature type="binding site" evidence="1">
    <location>
        <position position="165"/>
    </location>
    <ligand>
        <name>Zn(2+)</name>
        <dbReference type="ChEBI" id="CHEBI:29105"/>
        <label>2</label>
        <note>catalytic</note>
    </ligand>
</feature>
<feature type="binding site" evidence="1">
    <location>
        <position position="397"/>
    </location>
    <ligand>
        <name>Zn(2+)</name>
        <dbReference type="ChEBI" id="CHEBI:29105"/>
        <label>2</label>
        <note>catalytic</note>
    </ligand>
</feature>
<proteinExistence type="inferred from homology"/>
<gene>
    <name type="ordered locus">MJ0047</name>
</gene>
<name>Y047_METJA</name>
<reference key="1">
    <citation type="journal article" date="1996" name="Science">
        <title>Complete genome sequence of the methanogenic archaeon, Methanococcus jannaschii.</title>
        <authorList>
            <person name="Bult C.J."/>
            <person name="White O."/>
            <person name="Olsen G.J."/>
            <person name="Zhou L."/>
            <person name="Fleischmann R.D."/>
            <person name="Sutton G.G."/>
            <person name="Blake J.A."/>
            <person name="FitzGerald L.M."/>
            <person name="Clayton R.A."/>
            <person name="Gocayne J.D."/>
            <person name="Kerlavage A.R."/>
            <person name="Dougherty B.A."/>
            <person name="Tomb J.-F."/>
            <person name="Adams M.D."/>
            <person name="Reich C.I."/>
            <person name="Overbeek R."/>
            <person name="Kirkness E.F."/>
            <person name="Weinstock K.G."/>
            <person name="Merrick J.M."/>
            <person name="Glodek A."/>
            <person name="Scott J.L."/>
            <person name="Geoghagen N.S.M."/>
            <person name="Weidman J.F."/>
            <person name="Fuhrmann J.L."/>
            <person name="Nguyen D."/>
            <person name="Utterback T.R."/>
            <person name="Kelley J.M."/>
            <person name="Peterson J.D."/>
            <person name="Sadow P.W."/>
            <person name="Hanna M.C."/>
            <person name="Cotton M.D."/>
            <person name="Roberts K.M."/>
            <person name="Hurst M.A."/>
            <person name="Kaine B.P."/>
            <person name="Borodovsky M."/>
            <person name="Klenk H.-P."/>
            <person name="Fraser C.M."/>
            <person name="Smith H.O."/>
            <person name="Woese C.R."/>
            <person name="Venter J.C."/>
        </authorList>
    </citation>
    <scope>NUCLEOTIDE SEQUENCE [LARGE SCALE GENOMIC DNA]</scope>
    <source>
        <strain>ATCC 43067 / DSM 2661 / JAL-1 / JCM 10045 / NBRC 100440</strain>
    </source>
</reference>
<reference key="2">
    <citation type="journal article" date="2011" name="RNA Biol.">
        <title>Distinct activities of several RNase J proteins in methanogenic archaea.</title>
        <authorList>
            <person name="Levy S."/>
            <person name="Portnoy V."/>
            <person name="Admon J."/>
            <person name="Schuster G."/>
        </authorList>
    </citation>
    <scope>PROBABLE FUNCTION</scope>
    <scope>NOMENCLATURE</scope>
    <source>
        <strain>ATCC 43067 / DSM 2661 / JAL-1 / JCM 10045 / NBRC 100440</strain>
    </source>
</reference>
<organism>
    <name type="scientific">Methanocaldococcus jannaschii (strain ATCC 43067 / DSM 2661 / JAL-1 / JCM 10045 / NBRC 100440)</name>
    <name type="common">Methanococcus jannaschii</name>
    <dbReference type="NCBI Taxonomy" id="243232"/>
    <lineage>
        <taxon>Archaea</taxon>
        <taxon>Methanobacteriati</taxon>
        <taxon>Methanobacteriota</taxon>
        <taxon>Methanomada group</taxon>
        <taxon>Methanococci</taxon>
        <taxon>Methanococcales</taxon>
        <taxon>Methanocaldococcaceae</taxon>
        <taxon>Methanocaldococcus</taxon>
    </lineage>
</organism>